<reference key="1">
    <citation type="journal article" date="2002" name="Nature">
        <title>The genome sequence of Schizosaccharomyces pombe.</title>
        <authorList>
            <person name="Wood V."/>
            <person name="Gwilliam R."/>
            <person name="Rajandream M.A."/>
            <person name="Lyne M.H."/>
            <person name="Lyne R."/>
            <person name="Stewart A."/>
            <person name="Sgouros J.G."/>
            <person name="Peat N."/>
            <person name="Hayles J."/>
            <person name="Baker S.G."/>
            <person name="Basham D."/>
            <person name="Bowman S."/>
            <person name="Brooks K."/>
            <person name="Brown D."/>
            <person name="Brown S."/>
            <person name="Chillingworth T."/>
            <person name="Churcher C.M."/>
            <person name="Collins M."/>
            <person name="Connor R."/>
            <person name="Cronin A."/>
            <person name="Davis P."/>
            <person name="Feltwell T."/>
            <person name="Fraser A."/>
            <person name="Gentles S."/>
            <person name="Goble A."/>
            <person name="Hamlin N."/>
            <person name="Harris D.E."/>
            <person name="Hidalgo J."/>
            <person name="Hodgson G."/>
            <person name="Holroyd S."/>
            <person name="Hornsby T."/>
            <person name="Howarth S."/>
            <person name="Huckle E.J."/>
            <person name="Hunt S."/>
            <person name="Jagels K."/>
            <person name="James K.D."/>
            <person name="Jones L."/>
            <person name="Jones M."/>
            <person name="Leather S."/>
            <person name="McDonald S."/>
            <person name="McLean J."/>
            <person name="Mooney P."/>
            <person name="Moule S."/>
            <person name="Mungall K.L."/>
            <person name="Murphy L.D."/>
            <person name="Niblett D."/>
            <person name="Odell C."/>
            <person name="Oliver K."/>
            <person name="O'Neil S."/>
            <person name="Pearson D."/>
            <person name="Quail M.A."/>
            <person name="Rabbinowitsch E."/>
            <person name="Rutherford K.M."/>
            <person name="Rutter S."/>
            <person name="Saunders D."/>
            <person name="Seeger K."/>
            <person name="Sharp S."/>
            <person name="Skelton J."/>
            <person name="Simmonds M.N."/>
            <person name="Squares R."/>
            <person name="Squares S."/>
            <person name="Stevens K."/>
            <person name="Taylor K."/>
            <person name="Taylor R.G."/>
            <person name="Tivey A."/>
            <person name="Walsh S.V."/>
            <person name="Warren T."/>
            <person name="Whitehead S."/>
            <person name="Woodward J.R."/>
            <person name="Volckaert G."/>
            <person name="Aert R."/>
            <person name="Robben J."/>
            <person name="Grymonprez B."/>
            <person name="Weltjens I."/>
            <person name="Vanstreels E."/>
            <person name="Rieger M."/>
            <person name="Schaefer M."/>
            <person name="Mueller-Auer S."/>
            <person name="Gabel C."/>
            <person name="Fuchs M."/>
            <person name="Duesterhoeft A."/>
            <person name="Fritzc C."/>
            <person name="Holzer E."/>
            <person name="Moestl D."/>
            <person name="Hilbert H."/>
            <person name="Borzym K."/>
            <person name="Langer I."/>
            <person name="Beck A."/>
            <person name="Lehrach H."/>
            <person name="Reinhardt R."/>
            <person name="Pohl T.M."/>
            <person name="Eger P."/>
            <person name="Zimmermann W."/>
            <person name="Wedler H."/>
            <person name="Wambutt R."/>
            <person name="Purnelle B."/>
            <person name="Goffeau A."/>
            <person name="Cadieu E."/>
            <person name="Dreano S."/>
            <person name="Gloux S."/>
            <person name="Lelaure V."/>
            <person name="Mottier S."/>
            <person name="Galibert F."/>
            <person name="Aves S.J."/>
            <person name="Xiang Z."/>
            <person name="Hunt C."/>
            <person name="Moore K."/>
            <person name="Hurst S.M."/>
            <person name="Lucas M."/>
            <person name="Rochet M."/>
            <person name="Gaillardin C."/>
            <person name="Tallada V.A."/>
            <person name="Garzon A."/>
            <person name="Thode G."/>
            <person name="Daga R.R."/>
            <person name="Cruzado L."/>
            <person name="Jimenez J."/>
            <person name="Sanchez M."/>
            <person name="del Rey F."/>
            <person name="Benito J."/>
            <person name="Dominguez A."/>
            <person name="Revuelta J.L."/>
            <person name="Moreno S."/>
            <person name="Armstrong J."/>
            <person name="Forsburg S.L."/>
            <person name="Cerutti L."/>
            <person name="Lowe T."/>
            <person name="McCombie W.R."/>
            <person name="Paulsen I."/>
            <person name="Potashkin J."/>
            <person name="Shpakovski G.V."/>
            <person name="Ussery D."/>
            <person name="Barrell B.G."/>
            <person name="Nurse P."/>
        </authorList>
    </citation>
    <scope>NUCLEOTIDE SEQUENCE [LARGE SCALE GENOMIC DNA]</scope>
    <source>
        <strain>972 / ATCC 24843</strain>
    </source>
</reference>
<reference key="2">
    <citation type="journal article" date="2011" name="Science">
        <title>Comparative functional genomics of the fission yeasts.</title>
        <authorList>
            <person name="Rhind N."/>
            <person name="Chen Z."/>
            <person name="Yassour M."/>
            <person name="Thompson D.A."/>
            <person name="Haas B.J."/>
            <person name="Habib N."/>
            <person name="Wapinski I."/>
            <person name="Roy S."/>
            <person name="Lin M.F."/>
            <person name="Heiman D.I."/>
            <person name="Young S.K."/>
            <person name="Furuya K."/>
            <person name="Guo Y."/>
            <person name="Pidoux A."/>
            <person name="Chen H.M."/>
            <person name="Robbertse B."/>
            <person name="Goldberg J.M."/>
            <person name="Aoki K."/>
            <person name="Bayne E.H."/>
            <person name="Berlin A.M."/>
            <person name="Desjardins C.A."/>
            <person name="Dobbs E."/>
            <person name="Dukaj L."/>
            <person name="Fan L."/>
            <person name="FitzGerald M.G."/>
            <person name="French C."/>
            <person name="Gujja S."/>
            <person name="Hansen K."/>
            <person name="Keifenheim D."/>
            <person name="Levin J.Z."/>
            <person name="Mosher R.A."/>
            <person name="Mueller C.A."/>
            <person name="Pfiffner J."/>
            <person name="Priest M."/>
            <person name="Russ C."/>
            <person name="Smialowska A."/>
            <person name="Swoboda P."/>
            <person name="Sykes S.M."/>
            <person name="Vaughn M."/>
            <person name="Vengrova S."/>
            <person name="Yoder R."/>
            <person name="Zeng Q."/>
            <person name="Allshire R."/>
            <person name="Baulcombe D."/>
            <person name="Birren B.W."/>
            <person name="Brown W."/>
            <person name="Ekwall K."/>
            <person name="Kellis M."/>
            <person name="Leatherwood J."/>
            <person name="Levin H."/>
            <person name="Margalit H."/>
            <person name="Martienssen R."/>
            <person name="Nieduszynski C.A."/>
            <person name="Spatafora J.W."/>
            <person name="Friedman N."/>
            <person name="Dalgaard J.Z."/>
            <person name="Baumann P."/>
            <person name="Niki H."/>
            <person name="Regev A."/>
            <person name="Nusbaum C."/>
        </authorList>
    </citation>
    <scope>REVISION OF GENE MODEL</scope>
</reference>
<reference key="3">
    <citation type="journal article" date="2006" name="Nat. Biotechnol.">
        <title>ORFeome cloning and global analysis of protein localization in the fission yeast Schizosaccharomyces pombe.</title>
        <authorList>
            <person name="Matsuyama A."/>
            <person name="Arai R."/>
            <person name="Yashiroda Y."/>
            <person name="Shirai A."/>
            <person name="Kamata A."/>
            <person name="Sekido S."/>
            <person name="Kobayashi Y."/>
            <person name="Hashimoto A."/>
            <person name="Hamamoto M."/>
            <person name="Hiraoka Y."/>
            <person name="Horinouchi S."/>
            <person name="Yoshida M."/>
        </authorList>
    </citation>
    <scope>SUBCELLULAR LOCATION [LARGE SCALE ANALYSIS]</scope>
</reference>
<comment type="function">
    <text evidence="1">Accessory component of the V0 complex of vacuolar(H+)-ATPase (V-ATPase), a multisubunit enzyme composed of a peripheral complex (V1) that hydrolyzes ATP and a membrane integral complex (V0) that translocates protons (By similarity). V-ATPase is responsible for acidifying and maintaining the pH of intracellular compartments (By similarity).</text>
</comment>
<comment type="subunit">
    <text evidence="1">V-ATPase is a heteromultimeric enzyme composed of a peripheral catalytic V1 complex (components A to H) attached to an integral membrane V0 proton pore complex (components: a, c, c', c'', d, e, f and VOA1).</text>
</comment>
<comment type="subcellular location">
    <subcellularLocation>
        <location evidence="1">Endoplasmic reticulum membrane</location>
        <topology evidence="2">Multi-pass membrane protein</topology>
    </subcellularLocation>
</comment>
<proteinExistence type="inferred from homology"/>
<accession>Q8NIQ1</accession>
<gene>
    <name type="ORF">SPAC2F3.18c</name>
</gene>
<dbReference type="EMBL" id="CU329670">
    <property type="protein sequence ID" value="CAD43411.3"/>
    <property type="molecule type" value="Genomic_DNA"/>
</dbReference>
<dbReference type="RefSeq" id="NP_001018267.3">
    <property type="nucleotide sequence ID" value="NM_001019810.3"/>
</dbReference>
<dbReference type="SMR" id="Q8NIQ1"/>
<dbReference type="BioGRID" id="280507">
    <property type="interactions" value="3"/>
</dbReference>
<dbReference type="FunCoup" id="Q8NIQ1">
    <property type="interactions" value="3"/>
</dbReference>
<dbReference type="STRING" id="284812.Q8NIQ1"/>
<dbReference type="PaxDb" id="4896-SPAC2F3.18c.1"/>
<dbReference type="EnsemblFungi" id="SPAC2F3.18c.1">
    <property type="protein sequence ID" value="SPAC2F3.18c.1:pep"/>
    <property type="gene ID" value="SPAC2F3.18c"/>
</dbReference>
<dbReference type="KEGG" id="spo:3361431"/>
<dbReference type="PomBase" id="SPAC2F3.18c"/>
<dbReference type="VEuPathDB" id="FungiDB:SPAC2F3.18c"/>
<dbReference type="eggNOG" id="ENOG502S504">
    <property type="taxonomic scope" value="Eukaryota"/>
</dbReference>
<dbReference type="HOGENOM" id="CLU_115063_2_0_1"/>
<dbReference type="InParanoid" id="Q8NIQ1"/>
<dbReference type="OMA" id="FCGSQVL"/>
<dbReference type="PRO" id="PR:Q8NIQ1"/>
<dbReference type="Proteomes" id="UP000002485">
    <property type="component" value="Chromosome I"/>
</dbReference>
<dbReference type="GO" id="GO:0005783">
    <property type="term" value="C:endoplasmic reticulum"/>
    <property type="evidence" value="ECO:0007005"/>
    <property type="project" value="PomBase"/>
</dbReference>
<dbReference type="GO" id="GO:0005789">
    <property type="term" value="C:endoplasmic reticulum membrane"/>
    <property type="evidence" value="ECO:0007669"/>
    <property type="project" value="UniProtKB-SubCell"/>
</dbReference>
<dbReference type="GO" id="GO:0000220">
    <property type="term" value="C:vacuolar proton-transporting V-type ATPase, V0 domain"/>
    <property type="evidence" value="ECO:0000266"/>
    <property type="project" value="PomBase"/>
</dbReference>
<dbReference type="GO" id="GO:0004521">
    <property type="term" value="F:RNA endonuclease activity"/>
    <property type="evidence" value="ECO:0000318"/>
    <property type="project" value="GO_Central"/>
</dbReference>
<dbReference type="GO" id="GO:0007035">
    <property type="term" value="P:vacuolar acidification"/>
    <property type="evidence" value="ECO:0000305"/>
    <property type="project" value="PomBase"/>
</dbReference>
<dbReference type="GO" id="GO:0007034">
    <property type="term" value="P:vacuolar transport"/>
    <property type="evidence" value="ECO:0000305"/>
    <property type="project" value="PomBase"/>
</dbReference>
<dbReference type="InterPro" id="IPR056552">
    <property type="entry name" value="Ribonucl_Kappa"/>
</dbReference>
<dbReference type="Pfam" id="PF23489">
    <property type="entry name" value="V-ATPase_su_f"/>
    <property type="match status" value="1"/>
</dbReference>
<organism>
    <name type="scientific">Schizosaccharomyces pombe (strain 972 / ATCC 24843)</name>
    <name type="common">Fission yeast</name>
    <dbReference type="NCBI Taxonomy" id="284812"/>
    <lineage>
        <taxon>Eukaryota</taxon>
        <taxon>Fungi</taxon>
        <taxon>Dikarya</taxon>
        <taxon>Ascomycota</taxon>
        <taxon>Taphrinomycotina</taxon>
        <taxon>Schizosaccharomycetes</taxon>
        <taxon>Schizosaccharomycetales</taxon>
        <taxon>Schizosaccharomycetaceae</taxon>
        <taxon>Schizosaccharomyces</taxon>
    </lineage>
</organism>
<evidence type="ECO:0000250" key="1">
    <source>
        <dbReference type="UniProtKB" id="P0C5R9"/>
    </source>
</evidence>
<evidence type="ECO:0000255" key="2"/>
<sequence>MKPLVSPGLAKACTGLSLIGIVFLLVLSYLFSIEAETLMHDLVGSGLTGKQVAKTCLGAVVIYAVFFLFCGSQVIVSRYQKPVRI</sequence>
<name>RNK_SCHPO</name>
<protein>
    <recommendedName>
        <fullName evidence="1">V-type proton ATPase subunit f</fullName>
        <shortName>V-ATPase subunit f</shortName>
    </recommendedName>
</protein>
<keyword id="KW-0256">Endoplasmic reticulum</keyword>
<keyword id="KW-0472">Membrane</keyword>
<keyword id="KW-1185">Reference proteome</keyword>
<keyword id="KW-0812">Transmembrane</keyword>
<keyword id="KW-1133">Transmembrane helix</keyword>
<feature type="chain" id="PRO_0000304124" description="V-type proton ATPase subunit f">
    <location>
        <begin position="1"/>
        <end position="85"/>
    </location>
</feature>
<feature type="transmembrane region" description="Helical" evidence="2">
    <location>
        <begin position="13"/>
        <end position="33"/>
    </location>
</feature>
<feature type="transmembrane region" description="Helical" evidence="2">
    <location>
        <begin position="56"/>
        <end position="76"/>
    </location>
</feature>